<protein>
    <recommendedName>
        <fullName evidence="1">Small ribosomal subunit protein uS7</fullName>
    </recommendedName>
    <alternativeName>
        <fullName evidence="2">30S ribosomal protein S7</fullName>
    </alternativeName>
</protein>
<evidence type="ECO:0000255" key="1">
    <source>
        <dbReference type="HAMAP-Rule" id="MF_00480"/>
    </source>
</evidence>
<evidence type="ECO:0000305" key="2"/>
<dbReference type="EMBL" id="AE005673">
    <property type="protein sequence ID" value="AAK25163.1"/>
    <property type="molecule type" value="Genomic_DNA"/>
</dbReference>
<dbReference type="PIR" id="G87645">
    <property type="entry name" value="G87645"/>
</dbReference>
<dbReference type="RefSeq" id="NP_421995.1">
    <property type="nucleotide sequence ID" value="NC_002696.2"/>
</dbReference>
<dbReference type="RefSeq" id="WP_004624018.1">
    <property type="nucleotide sequence ID" value="NC_002696.2"/>
</dbReference>
<dbReference type="SMR" id="Q9A3K3"/>
<dbReference type="STRING" id="190650.CC_3201"/>
<dbReference type="EnsemblBacteria" id="AAK25163">
    <property type="protein sequence ID" value="AAK25163"/>
    <property type="gene ID" value="CC_3201"/>
</dbReference>
<dbReference type="KEGG" id="ccr:CC_3201"/>
<dbReference type="PATRIC" id="fig|190650.5.peg.3207"/>
<dbReference type="eggNOG" id="COG0049">
    <property type="taxonomic scope" value="Bacteria"/>
</dbReference>
<dbReference type="HOGENOM" id="CLU_072226_1_1_5"/>
<dbReference type="BioCyc" id="CAULO:CC3201-MONOMER"/>
<dbReference type="Proteomes" id="UP000001816">
    <property type="component" value="Chromosome"/>
</dbReference>
<dbReference type="GO" id="GO:0015935">
    <property type="term" value="C:small ribosomal subunit"/>
    <property type="evidence" value="ECO:0007669"/>
    <property type="project" value="InterPro"/>
</dbReference>
<dbReference type="GO" id="GO:0019843">
    <property type="term" value="F:rRNA binding"/>
    <property type="evidence" value="ECO:0007669"/>
    <property type="project" value="UniProtKB-UniRule"/>
</dbReference>
<dbReference type="GO" id="GO:0003735">
    <property type="term" value="F:structural constituent of ribosome"/>
    <property type="evidence" value="ECO:0007669"/>
    <property type="project" value="InterPro"/>
</dbReference>
<dbReference type="GO" id="GO:0000049">
    <property type="term" value="F:tRNA binding"/>
    <property type="evidence" value="ECO:0007669"/>
    <property type="project" value="UniProtKB-UniRule"/>
</dbReference>
<dbReference type="GO" id="GO:0006412">
    <property type="term" value="P:translation"/>
    <property type="evidence" value="ECO:0007669"/>
    <property type="project" value="UniProtKB-UniRule"/>
</dbReference>
<dbReference type="CDD" id="cd14869">
    <property type="entry name" value="uS7_Bacteria"/>
    <property type="match status" value="1"/>
</dbReference>
<dbReference type="FunFam" id="1.10.455.10:FF:000001">
    <property type="entry name" value="30S ribosomal protein S7"/>
    <property type="match status" value="1"/>
</dbReference>
<dbReference type="Gene3D" id="1.10.455.10">
    <property type="entry name" value="Ribosomal protein S7 domain"/>
    <property type="match status" value="1"/>
</dbReference>
<dbReference type="HAMAP" id="MF_00480_B">
    <property type="entry name" value="Ribosomal_uS7_B"/>
    <property type="match status" value="1"/>
</dbReference>
<dbReference type="InterPro" id="IPR000235">
    <property type="entry name" value="Ribosomal_uS7"/>
</dbReference>
<dbReference type="InterPro" id="IPR005717">
    <property type="entry name" value="Ribosomal_uS7_bac/org-type"/>
</dbReference>
<dbReference type="InterPro" id="IPR020606">
    <property type="entry name" value="Ribosomal_uS7_CS"/>
</dbReference>
<dbReference type="InterPro" id="IPR023798">
    <property type="entry name" value="Ribosomal_uS7_dom"/>
</dbReference>
<dbReference type="InterPro" id="IPR036823">
    <property type="entry name" value="Ribosomal_uS7_dom_sf"/>
</dbReference>
<dbReference type="NCBIfam" id="TIGR01029">
    <property type="entry name" value="rpsG_bact"/>
    <property type="match status" value="1"/>
</dbReference>
<dbReference type="PANTHER" id="PTHR11205">
    <property type="entry name" value="RIBOSOMAL PROTEIN S7"/>
    <property type="match status" value="1"/>
</dbReference>
<dbReference type="Pfam" id="PF00177">
    <property type="entry name" value="Ribosomal_S7"/>
    <property type="match status" value="1"/>
</dbReference>
<dbReference type="PIRSF" id="PIRSF002122">
    <property type="entry name" value="RPS7p_RPS7a_RPS5e_RPS7o"/>
    <property type="match status" value="1"/>
</dbReference>
<dbReference type="SUPFAM" id="SSF47973">
    <property type="entry name" value="Ribosomal protein S7"/>
    <property type="match status" value="1"/>
</dbReference>
<dbReference type="PROSITE" id="PS00052">
    <property type="entry name" value="RIBOSOMAL_S7"/>
    <property type="match status" value="1"/>
</dbReference>
<proteinExistence type="inferred from homology"/>
<comment type="function">
    <text evidence="1">One of the primary rRNA binding proteins, it binds directly to 16S rRNA where it nucleates assembly of the head domain of the 30S subunit. Is located at the subunit interface close to the decoding center, probably blocks exit of the E-site tRNA.</text>
</comment>
<comment type="subunit">
    <text evidence="1">Part of the 30S ribosomal subunit. Contacts proteins S9 and S11.</text>
</comment>
<comment type="similarity">
    <text evidence="1">Belongs to the universal ribosomal protein uS7 family.</text>
</comment>
<gene>
    <name evidence="1" type="primary">rpsG</name>
    <name type="ordered locus">CC_3201</name>
</gene>
<name>RS7_CAUVC</name>
<accession>Q9A3K3</accession>
<organism>
    <name type="scientific">Caulobacter vibrioides (strain ATCC 19089 / CIP 103742 / CB 15)</name>
    <name type="common">Caulobacter crescentus</name>
    <dbReference type="NCBI Taxonomy" id="190650"/>
    <lineage>
        <taxon>Bacteria</taxon>
        <taxon>Pseudomonadati</taxon>
        <taxon>Pseudomonadota</taxon>
        <taxon>Alphaproteobacteria</taxon>
        <taxon>Caulobacterales</taxon>
        <taxon>Caulobacteraceae</taxon>
        <taxon>Caulobacter</taxon>
    </lineage>
</organism>
<reference key="1">
    <citation type="journal article" date="2001" name="Proc. Natl. Acad. Sci. U.S.A.">
        <title>Complete genome sequence of Caulobacter crescentus.</title>
        <authorList>
            <person name="Nierman W.C."/>
            <person name="Feldblyum T.V."/>
            <person name="Laub M.T."/>
            <person name="Paulsen I.T."/>
            <person name="Nelson K.E."/>
            <person name="Eisen J.A."/>
            <person name="Heidelberg J.F."/>
            <person name="Alley M.R.K."/>
            <person name="Ohta N."/>
            <person name="Maddock J.R."/>
            <person name="Potocka I."/>
            <person name="Nelson W.C."/>
            <person name="Newton A."/>
            <person name="Stephens C."/>
            <person name="Phadke N.D."/>
            <person name="Ely B."/>
            <person name="DeBoy R.T."/>
            <person name="Dodson R.J."/>
            <person name="Durkin A.S."/>
            <person name="Gwinn M.L."/>
            <person name="Haft D.H."/>
            <person name="Kolonay J.F."/>
            <person name="Smit J."/>
            <person name="Craven M.B."/>
            <person name="Khouri H.M."/>
            <person name="Shetty J."/>
            <person name="Berry K.J."/>
            <person name="Utterback T.R."/>
            <person name="Tran K."/>
            <person name="Wolf A.M."/>
            <person name="Vamathevan J.J."/>
            <person name="Ermolaeva M.D."/>
            <person name="White O."/>
            <person name="Salzberg S.L."/>
            <person name="Venter J.C."/>
            <person name="Shapiro L."/>
            <person name="Fraser C.M."/>
        </authorList>
    </citation>
    <scope>NUCLEOTIDE SEQUENCE [LARGE SCALE GENOMIC DNA]</scope>
    <source>
        <strain>ATCC 19089 / CIP 103742 / CB 15</strain>
    </source>
</reference>
<feature type="chain" id="PRO_0000124242" description="Small ribosomal subunit protein uS7">
    <location>
        <begin position="1"/>
        <end position="157"/>
    </location>
</feature>
<sequence length="157" mass="18002">MSRRRRAEKRQVLPDPKFGDLVVTKFMNYVMYEGKKAVAENIIYGAFDILEAKRKDQGPLETFHSALDNVAPAIEVRSRRVGGATYQVPVEVRPDRRRALAIRWLVTAARKRGENTMTEKLAGELLDASNNRGTAVKKREDTHKMAEANRAFSHYRW</sequence>
<keyword id="KW-1185">Reference proteome</keyword>
<keyword id="KW-0687">Ribonucleoprotein</keyword>
<keyword id="KW-0689">Ribosomal protein</keyword>
<keyword id="KW-0694">RNA-binding</keyword>
<keyword id="KW-0699">rRNA-binding</keyword>
<keyword id="KW-0820">tRNA-binding</keyword>